<sequence>MPEGPEIRRAADKLEAAIKGEPLTNVWFAFPQLQPYQTQLTGQRVTHIATRGKALLTHFSGGLTLYSHNQLYGVWRVVDAGVEPQSNRVLRVRLQTASKAILLYSASDIDILTAEQVANHPFLLRVGPDVLDMTLTAEQVKARLLSAKFRNRQFSGLLLDQAFLAGLGNYLRVEILWQVGLSGKRKAAELSDSQLDALAHALLDIPRLSYRTRGLVDDNKHHGALFRFKVFHRDGERCERCGGIIEKTTLSSRPFYWCPGCQH</sequence>
<comment type="function">
    <text evidence="1">Involved in base excision repair of DNA damaged by oxidation or by mutagenic agents. Acts as a DNA glycosylase that recognizes and removes damaged bases. Has a preference for oxidized pyrimidines, such as thymine glycol, 5,6-dihydrouracil and 5,6-dihydrothymine. Has AP (apurinic/apyrimidinic) lyase activity and introduces nicks in the DNA strand. Cleaves the DNA backbone by beta-delta elimination to generate a single-strand break at the site of the removed base with both 3'- and 5'-phosphates.</text>
</comment>
<comment type="catalytic activity">
    <reaction evidence="1">
        <text>2'-deoxyribonucleotide-(2'-deoxyribose 5'-phosphate)-2'-deoxyribonucleotide-DNA = a 3'-end 2'-deoxyribonucleotide-(2,3-dehydro-2,3-deoxyribose 5'-phosphate)-DNA + a 5'-end 5'-phospho-2'-deoxyribonucleoside-DNA + H(+)</text>
        <dbReference type="Rhea" id="RHEA:66592"/>
        <dbReference type="Rhea" id="RHEA-COMP:13180"/>
        <dbReference type="Rhea" id="RHEA-COMP:16897"/>
        <dbReference type="Rhea" id="RHEA-COMP:17067"/>
        <dbReference type="ChEBI" id="CHEBI:15378"/>
        <dbReference type="ChEBI" id="CHEBI:136412"/>
        <dbReference type="ChEBI" id="CHEBI:157695"/>
        <dbReference type="ChEBI" id="CHEBI:167181"/>
        <dbReference type="EC" id="4.2.99.18"/>
    </reaction>
</comment>
<comment type="cofactor">
    <cofactor evidence="1">
        <name>Zn(2+)</name>
        <dbReference type="ChEBI" id="CHEBI:29105"/>
    </cofactor>
    <text evidence="1">Binds 1 zinc ion per subunit.</text>
</comment>
<comment type="similarity">
    <text evidence="1">Belongs to the FPG family.</text>
</comment>
<accession>A6T6E8</accession>
<gene>
    <name evidence="1" type="primary">nei</name>
    <name type="ordered locus">KPN78578_07080</name>
    <name type="ORF">KPN_00726</name>
</gene>
<keyword id="KW-0227">DNA damage</keyword>
<keyword id="KW-0234">DNA repair</keyword>
<keyword id="KW-0238">DNA-binding</keyword>
<keyword id="KW-0326">Glycosidase</keyword>
<keyword id="KW-0378">Hydrolase</keyword>
<keyword id="KW-0456">Lyase</keyword>
<keyword id="KW-0479">Metal-binding</keyword>
<keyword id="KW-0511">Multifunctional enzyme</keyword>
<keyword id="KW-0862">Zinc</keyword>
<keyword id="KW-0863">Zinc-finger</keyword>
<evidence type="ECO:0000255" key="1">
    <source>
        <dbReference type="HAMAP-Rule" id="MF_01253"/>
    </source>
</evidence>
<proteinExistence type="inferred from homology"/>
<protein>
    <recommendedName>
        <fullName evidence="1">Endonuclease 8</fullName>
    </recommendedName>
    <alternativeName>
        <fullName evidence="1">DNA glycosylase/AP lyase Nei</fullName>
        <ecNumber evidence="1">3.2.2.-</ecNumber>
        <ecNumber evidence="1">4.2.99.18</ecNumber>
    </alternativeName>
    <alternativeName>
        <fullName evidence="1">DNA-(apurinic or apyrimidinic site) lyase Nei</fullName>
    </alternativeName>
    <alternativeName>
        <fullName evidence="1">Endonuclease VIII</fullName>
    </alternativeName>
</protein>
<organism>
    <name type="scientific">Klebsiella pneumoniae subsp. pneumoniae (strain ATCC 700721 / MGH 78578)</name>
    <dbReference type="NCBI Taxonomy" id="272620"/>
    <lineage>
        <taxon>Bacteria</taxon>
        <taxon>Pseudomonadati</taxon>
        <taxon>Pseudomonadota</taxon>
        <taxon>Gammaproteobacteria</taxon>
        <taxon>Enterobacterales</taxon>
        <taxon>Enterobacteriaceae</taxon>
        <taxon>Klebsiella/Raoultella group</taxon>
        <taxon>Klebsiella</taxon>
        <taxon>Klebsiella pneumoniae complex</taxon>
    </lineage>
</organism>
<name>END8_KLEP7</name>
<reference key="1">
    <citation type="submission" date="2006-09" db="EMBL/GenBank/DDBJ databases">
        <authorList>
            <consortium name="The Klebsiella pneumonia Genome Sequencing Project"/>
            <person name="McClelland M."/>
            <person name="Sanderson E.K."/>
            <person name="Spieth J."/>
            <person name="Clifton W.S."/>
            <person name="Latreille P."/>
            <person name="Sabo A."/>
            <person name="Pepin K."/>
            <person name="Bhonagiri V."/>
            <person name="Porwollik S."/>
            <person name="Ali J."/>
            <person name="Wilson R.K."/>
        </authorList>
    </citation>
    <scope>NUCLEOTIDE SEQUENCE [LARGE SCALE GENOMIC DNA]</scope>
    <source>
        <strain>ATCC 700721 / MGH 78578</strain>
    </source>
</reference>
<feature type="initiator methionine" description="Removed" evidence="1">
    <location>
        <position position="1"/>
    </location>
</feature>
<feature type="chain" id="PRO_1000067206" description="Endonuclease 8">
    <location>
        <begin position="2"/>
        <end position="263"/>
    </location>
</feature>
<feature type="zinc finger region" description="FPG-type" evidence="1">
    <location>
        <begin position="229"/>
        <end position="263"/>
    </location>
</feature>
<feature type="active site" description="Schiff-base intermediate with DNA" evidence="1">
    <location>
        <position position="2"/>
    </location>
</feature>
<feature type="active site" description="Proton donor" evidence="1">
    <location>
        <position position="3"/>
    </location>
</feature>
<feature type="active site" description="Proton donor; for beta-elimination activity" evidence="1">
    <location>
        <position position="53"/>
    </location>
</feature>
<feature type="active site" description="Proton donor; for delta-elimination activity" evidence="1">
    <location>
        <position position="253"/>
    </location>
</feature>
<feature type="binding site" evidence="1">
    <location>
        <position position="70"/>
    </location>
    <ligand>
        <name>DNA</name>
        <dbReference type="ChEBI" id="CHEBI:16991"/>
    </ligand>
</feature>
<feature type="binding site" evidence="1">
    <location>
        <position position="125"/>
    </location>
    <ligand>
        <name>DNA</name>
        <dbReference type="ChEBI" id="CHEBI:16991"/>
    </ligand>
</feature>
<feature type="binding site" evidence="1">
    <location>
        <position position="169"/>
    </location>
    <ligand>
        <name>DNA</name>
        <dbReference type="ChEBI" id="CHEBI:16991"/>
    </ligand>
</feature>
<dbReference type="EC" id="3.2.2.-" evidence="1"/>
<dbReference type="EC" id="4.2.99.18" evidence="1"/>
<dbReference type="EMBL" id="CP000647">
    <property type="protein sequence ID" value="ABR76169.1"/>
    <property type="molecule type" value="Genomic_DNA"/>
</dbReference>
<dbReference type="RefSeq" id="WP_004223693.1">
    <property type="nucleotide sequence ID" value="NC_009648.1"/>
</dbReference>
<dbReference type="SMR" id="A6T6E8"/>
<dbReference type="STRING" id="272620.KPN_00726"/>
<dbReference type="PaxDb" id="272620-KPN_00726"/>
<dbReference type="EnsemblBacteria" id="ABR76169">
    <property type="protein sequence ID" value="ABR76169"/>
    <property type="gene ID" value="KPN_00726"/>
</dbReference>
<dbReference type="KEGG" id="kpn:KPN_00726"/>
<dbReference type="HOGENOM" id="CLU_038423_2_2_6"/>
<dbReference type="Proteomes" id="UP000000265">
    <property type="component" value="Chromosome"/>
</dbReference>
<dbReference type="GO" id="GO:0140078">
    <property type="term" value="F:class I DNA-(apurinic or apyrimidinic site) endonuclease activity"/>
    <property type="evidence" value="ECO:0007669"/>
    <property type="project" value="UniProtKB-EC"/>
</dbReference>
<dbReference type="GO" id="GO:0003684">
    <property type="term" value="F:damaged DNA binding"/>
    <property type="evidence" value="ECO:0007669"/>
    <property type="project" value="InterPro"/>
</dbReference>
<dbReference type="GO" id="GO:0000703">
    <property type="term" value="F:oxidized pyrimidine nucleobase lesion DNA N-glycosylase activity"/>
    <property type="evidence" value="ECO:0007669"/>
    <property type="project" value="UniProtKB-UniRule"/>
</dbReference>
<dbReference type="GO" id="GO:0008270">
    <property type="term" value="F:zinc ion binding"/>
    <property type="evidence" value="ECO:0007669"/>
    <property type="project" value="UniProtKB-UniRule"/>
</dbReference>
<dbReference type="GO" id="GO:0006284">
    <property type="term" value="P:base-excision repair"/>
    <property type="evidence" value="ECO:0007669"/>
    <property type="project" value="InterPro"/>
</dbReference>
<dbReference type="CDD" id="cd08965">
    <property type="entry name" value="EcNei-like_N"/>
    <property type="match status" value="1"/>
</dbReference>
<dbReference type="FunFam" id="1.10.8.50:FF:000005">
    <property type="entry name" value="Endonuclease 8"/>
    <property type="match status" value="1"/>
</dbReference>
<dbReference type="FunFam" id="3.20.190.10:FF:000002">
    <property type="entry name" value="Endonuclease 8"/>
    <property type="match status" value="1"/>
</dbReference>
<dbReference type="Gene3D" id="1.10.8.50">
    <property type="match status" value="1"/>
</dbReference>
<dbReference type="Gene3D" id="3.20.190.10">
    <property type="entry name" value="MutM-like, N-terminal"/>
    <property type="match status" value="1"/>
</dbReference>
<dbReference type="HAMAP" id="MF_01253">
    <property type="entry name" value="Endonuclease_8"/>
    <property type="match status" value="1"/>
</dbReference>
<dbReference type="InterPro" id="IPR015886">
    <property type="entry name" value="DNA_glyclase/AP_lyase_DNA-bd"/>
</dbReference>
<dbReference type="InterPro" id="IPR015887">
    <property type="entry name" value="DNA_glyclase_Znf_dom_DNA_BS"/>
</dbReference>
<dbReference type="InterPro" id="IPR044091">
    <property type="entry name" value="EcNei-like_N"/>
</dbReference>
<dbReference type="InterPro" id="IPR023713">
    <property type="entry name" value="Endonuclease-VIII"/>
</dbReference>
<dbReference type="InterPro" id="IPR012319">
    <property type="entry name" value="FPG_cat"/>
</dbReference>
<dbReference type="InterPro" id="IPR035937">
    <property type="entry name" value="MutM-like_N-ter"/>
</dbReference>
<dbReference type="InterPro" id="IPR010979">
    <property type="entry name" value="Ribosomal_uS13-like_H2TH"/>
</dbReference>
<dbReference type="InterPro" id="IPR000214">
    <property type="entry name" value="Znf_DNA_glyclase/AP_lyase"/>
</dbReference>
<dbReference type="InterPro" id="IPR010663">
    <property type="entry name" value="Znf_FPG/IleRS"/>
</dbReference>
<dbReference type="NCBIfam" id="NF007763">
    <property type="entry name" value="PRK10445.1"/>
    <property type="match status" value="1"/>
</dbReference>
<dbReference type="PANTHER" id="PTHR42697">
    <property type="entry name" value="ENDONUCLEASE 8"/>
    <property type="match status" value="1"/>
</dbReference>
<dbReference type="PANTHER" id="PTHR42697:SF1">
    <property type="entry name" value="ENDONUCLEASE 8"/>
    <property type="match status" value="1"/>
</dbReference>
<dbReference type="Pfam" id="PF01149">
    <property type="entry name" value="Fapy_DNA_glyco"/>
    <property type="match status" value="1"/>
</dbReference>
<dbReference type="Pfam" id="PF06831">
    <property type="entry name" value="H2TH"/>
    <property type="match status" value="1"/>
</dbReference>
<dbReference type="Pfam" id="PF06827">
    <property type="entry name" value="zf-FPG_IleRS"/>
    <property type="match status" value="1"/>
</dbReference>
<dbReference type="SMART" id="SM00898">
    <property type="entry name" value="Fapy_DNA_glyco"/>
    <property type="match status" value="1"/>
</dbReference>
<dbReference type="SMART" id="SM01232">
    <property type="entry name" value="H2TH"/>
    <property type="match status" value="1"/>
</dbReference>
<dbReference type="SUPFAM" id="SSF57716">
    <property type="entry name" value="Glucocorticoid receptor-like (DNA-binding domain)"/>
    <property type="match status" value="1"/>
</dbReference>
<dbReference type="SUPFAM" id="SSF81624">
    <property type="entry name" value="N-terminal domain of MutM-like DNA repair proteins"/>
    <property type="match status" value="1"/>
</dbReference>
<dbReference type="SUPFAM" id="SSF46946">
    <property type="entry name" value="S13-like H2TH domain"/>
    <property type="match status" value="1"/>
</dbReference>
<dbReference type="PROSITE" id="PS51068">
    <property type="entry name" value="FPG_CAT"/>
    <property type="match status" value="1"/>
</dbReference>
<dbReference type="PROSITE" id="PS01242">
    <property type="entry name" value="ZF_FPG_1"/>
    <property type="match status" value="1"/>
</dbReference>
<dbReference type="PROSITE" id="PS51066">
    <property type="entry name" value="ZF_FPG_2"/>
    <property type="match status" value="1"/>
</dbReference>